<proteinExistence type="evidence at protein level"/>
<accession>Q4WAW7</accession>
<accession>Q4G2I1</accession>
<reference key="1">
    <citation type="journal article" date="2005" name="Microbiology">
        <title>Overproduction, purification and characterization of FtmPT1, a brevianamide F prenyltransferase from Aspergillus fumigatus.</title>
        <authorList>
            <person name="Grundmann A."/>
            <person name="Li S.M."/>
        </authorList>
    </citation>
    <scope>NUCLEOTIDE SEQUENCE [MRNA]</scope>
    <scope>FUNCTION</scope>
    <scope>CATALYTIC ACTIVITY</scope>
    <scope>BIOPHYSICOCHEMICAL PROPERTIES</scope>
    <scope>PATHWAY</scope>
    <source>
        <strain>ATCC MYA-4609 / CBS 101355 / FGSC A1100 / Af293</strain>
    </source>
</reference>
<reference key="2">
    <citation type="journal article" date="2005" name="Nature">
        <title>Genomic sequence of the pathogenic and allergenic filamentous fungus Aspergillus fumigatus.</title>
        <authorList>
            <person name="Nierman W.C."/>
            <person name="Pain A."/>
            <person name="Anderson M.J."/>
            <person name="Wortman J.R."/>
            <person name="Kim H.S."/>
            <person name="Arroyo J."/>
            <person name="Berriman M."/>
            <person name="Abe K."/>
            <person name="Archer D.B."/>
            <person name="Bermejo C."/>
            <person name="Bennett J.W."/>
            <person name="Bowyer P."/>
            <person name="Chen D."/>
            <person name="Collins M."/>
            <person name="Coulsen R."/>
            <person name="Davies R."/>
            <person name="Dyer P.S."/>
            <person name="Farman M.L."/>
            <person name="Fedorova N."/>
            <person name="Fedorova N.D."/>
            <person name="Feldblyum T.V."/>
            <person name="Fischer R."/>
            <person name="Fosker N."/>
            <person name="Fraser A."/>
            <person name="Garcia J.L."/>
            <person name="Garcia M.J."/>
            <person name="Goble A."/>
            <person name="Goldman G.H."/>
            <person name="Gomi K."/>
            <person name="Griffith-Jones S."/>
            <person name="Gwilliam R."/>
            <person name="Haas B.J."/>
            <person name="Haas H."/>
            <person name="Harris D.E."/>
            <person name="Horiuchi H."/>
            <person name="Huang J."/>
            <person name="Humphray S."/>
            <person name="Jimenez J."/>
            <person name="Keller N."/>
            <person name="Khouri H."/>
            <person name="Kitamoto K."/>
            <person name="Kobayashi T."/>
            <person name="Konzack S."/>
            <person name="Kulkarni R."/>
            <person name="Kumagai T."/>
            <person name="Lafton A."/>
            <person name="Latge J.-P."/>
            <person name="Li W."/>
            <person name="Lord A."/>
            <person name="Lu C."/>
            <person name="Majoros W.H."/>
            <person name="May G.S."/>
            <person name="Miller B.L."/>
            <person name="Mohamoud Y."/>
            <person name="Molina M."/>
            <person name="Monod M."/>
            <person name="Mouyna I."/>
            <person name="Mulligan S."/>
            <person name="Murphy L.D."/>
            <person name="O'Neil S."/>
            <person name="Paulsen I."/>
            <person name="Penalva M.A."/>
            <person name="Pertea M."/>
            <person name="Price C."/>
            <person name="Pritchard B.L."/>
            <person name="Quail M.A."/>
            <person name="Rabbinowitsch E."/>
            <person name="Rawlins N."/>
            <person name="Rajandream M.A."/>
            <person name="Reichard U."/>
            <person name="Renauld H."/>
            <person name="Robson G.D."/>
            <person name="Rodriguez de Cordoba S."/>
            <person name="Rodriguez-Pena J.M."/>
            <person name="Ronning C.M."/>
            <person name="Rutter S."/>
            <person name="Salzberg S.L."/>
            <person name="Sanchez M."/>
            <person name="Sanchez-Ferrero J.C."/>
            <person name="Saunders D."/>
            <person name="Seeger K."/>
            <person name="Squares R."/>
            <person name="Squares S."/>
            <person name="Takeuchi M."/>
            <person name="Tekaia F."/>
            <person name="Turner G."/>
            <person name="Vazquez de Aldana C.R."/>
            <person name="Weidman J."/>
            <person name="White O."/>
            <person name="Woodward J.R."/>
            <person name="Yu J.-H."/>
            <person name="Fraser C.M."/>
            <person name="Galagan J.E."/>
            <person name="Asai K."/>
            <person name="Machida M."/>
            <person name="Hall N."/>
            <person name="Barrell B.G."/>
            <person name="Denning D.W."/>
        </authorList>
    </citation>
    <scope>NUCLEOTIDE SEQUENCE [LARGE SCALE GENOMIC DNA]</scope>
    <source>
        <strain>ATCC MYA-4609 / CBS 101355 / FGSC A1100 / Af293</strain>
    </source>
</reference>
<reference key="3">
    <citation type="journal article" date="2006" name="ChemBioChem">
        <title>The fumitremorgin gene cluster of Aspergillus fumigatus: identification of a gene encoding brevianamide F synthetase.</title>
        <authorList>
            <person name="Maiya S."/>
            <person name="Grundmann A."/>
            <person name="Li S.M."/>
            <person name="Turner G."/>
        </authorList>
    </citation>
    <scope>FUNCTION</scope>
</reference>
<reference key="4">
    <citation type="journal article" date="2008" name="ChemBioChem">
        <title>FtmPT2, an N-prenyltransferase from Aspergillus fumigatus, catalyses the last step in the biosynthesis of fumitremorgin B.</title>
        <authorList>
            <person name="Grundmann A."/>
            <person name="Kuznetsova T."/>
            <person name="Afiyatullov S.S."/>
            <person name="Li S.M."/>
        </authorList>
    </citation>
    <scope>FUNCTION</scope>
</reference>
<reference key="5">
    <citation type="journal article" date="2008" name="Chem. Biol.">
        <title>Tryptophan aminopeptidase activity of several indole prenyltransferases from Aspergillus fumigatus.</title>
        <authorList>
            <person name="Kremer A."/>
            <person name="Li S.-M."/>
        </authorList>
    </citation>
    <scope>FUNCTION</scope>
    <scope>CATALYTIC ACTIVITY</scope>
    <scope>BIOPHYSICOCHEMICAL PROPERTIES</scope>
    <scope>SUBSTRATE SPECIFICITY</scope>
</reference>
<reference key="6">
    <citation type="journal article" date="2009" name="ChemBioChem">
        <title>Identification of cytochrome P450s required for fumitremorgin biosynthesis in Aspergillus fumigatus.</title>
        <authorList>
            <person name="Kato N."/>
            <person name="Suzuki H."/>
            <person name="Takagi H."/>
            <person name="Asami Y."/>
            <person name="Kakeya H."/>
            <person name="Uramoto M."/>
            <person name="Usui T."/>
            <person name="Takahashi S."/>
            <person name="Sugimoto Y."/>
            <person name="Osada H."/>
        </authorList>
    </citation>
    <scope>FUNCTION</scope>
</reference>
<reference key="7">
    <citation type="journal article" date="2009" name="J. Nat. Prod.">
        <title>Substrate promiscuity of the cyclic dipeptide prenyltransferases from Aspergillus fumigatus.</title>
        <authorList>
            <person name="Zou H."/>
            <person name="Zheng X."/>
            <person name="Li S.M."/>
        </authorList>
    </citation>
    <scope>FUNCTION</scope>
    <scope>CATALYTIC ACTIVITY</scope>
    <scope>BIOPHYSICOCHEMICAL PROPERTIES</scope>
    <scope>SUBSTRATE SPECIFICITY</scope>
</reference>
<reference key="8">
    <citation type="journal article" date="2009" name="Org. Biomol. Chem.">
        <title>FtmOx1, a non-heme Fe(II) and alpha-ketoglutarate-dependent dioxygenase, catalyses the endoperoxide formation of verruculogen in Aspergillus fumigatus.</title>
        <authorList>
            <person name="Steffan N."/>
            <person name="Grundmann A."/>
            <person name="Afiyatullov S."/>
            <person name="Ruan H."/>
            <person name="Li S.M."/>
        </authorList>
    </citation>
    <scope>FUNCTION</scope>
</reference>
<reference key="9">
    <citation type="journal article" date="2012" name="Org. Biomol. Chem.">
        <title>Breaking the regioselectivity of indole prenyltransferases: identification of regular C3-prenylated hexahydropyrrolo[2,3-b]indoles as side products of the regular C2-prenyltransferase FtmPT1.</title>
        <authorList>
            <person name="Wollinsky B."/>
            <person name="Ludwig L."/>
            <person name="Xie X."/>
            <person name="Li S.M."/>
        </authorList>
    </citation>
    <scope>FUNCTION</scope>
</reference>
<reference key="10">
    <citation type="journal article" date="2013" name="Biosci. Biotechnol. Biochem.">
        <title>A point mutation in ftmD blocks the fumitremorgin biosynthetic pathway in Aspergillus fumigatus strain Af293.</title>
        <authorList>
            <person name="Kato N."/>
            <person name="Suzuki H."/>
            <person name="Okumura H."/>
            <person name="Takahashi S."/>
            <person name="Osada H."/>
        </authorList>
    </citation>
    <scope>FUNCTION</scope>
    <scope>PATHWAY</scope>
</reference>
<reference key="11">
    <citation type="journal article" date="2010" name="J. Am. Chem. Soc.">
        <title>Structure-function analysis of an enzymatic prenyl transfer reaction identifies a reaction chamber with modifiable specificity.</title>
        <authorList>
            <person name="Jost M."/>
            <person name="Zocher G."/>
            <person name="Tarcz S."/>
            <person name="Matuschek M."/>
            <person name="Xie X."/>
            <person name="Li S.M."/>
            <person name="Stehle T."/>
        </authorList>
    </citation>
    <scope>X-RAY CRYSTALLOGRAPHY (2.40 ANGSTROMS) IN COMPLEX WITH DIMETHYLALLYL S-THIOLODIPHOSPHATE AND BREVIANAMIDE F</scope>
    <scope>MUTAGENESIS OF GLU-102; GLY-115 AND HIS-279</scope>
    <source>
        <strain>ATCC MYA-4609 / CBS 101355 / FGSC A1100 / Af293</strain>
    </source>
</reference>
<keyword id="KW-0002">3D-structure</keyword>
<keyword id="KW-0031">Aminopeptidase</keyword>
<keyword id="KW-0378">Hydrolase</keyword>
<keyword id="KW-0637">Prenyltransferase</keyword>
<keyword id="KW-0645">Protease</keyword>
<keyword id="KW-1185">Reference proteome</keyword>
<keyword id="KW-0808">Transferase</keyword>
<keyword id="KW-0843">Virulence</keyword>
<sequence length="464" mass="52607">MPPAPPDQKPCHQLQPAPYRALSESILFGSVDEERWWHSTAPILSRLLISSNYDVDVQYKYLSLYRHLVLPALGPYPQRDPETGIIATQWRSGMVLTGLPIEFSNNVARALIRIGVDPVTADSGTAQDPFNTTRPKVYLETAARLLPGVDLTRFYEFETELVITKAEEAVLQANPDLFRSPWKSQILTAMDLQKSGTVLVKAYFYPQPKSAVTGRSTEDLLVNAIRKVDREGRFETQLANLQRYIERRRRGLHVPGVTADKPPATAADKAFDACSFFPHFLSTDLVEPGKSRVKFYASERHVNLQMVEDIWTFGGLRRDPDALRGLELLRHFWADIQMREGYYTMPRGFCELGKSSAGFEAPMMFHFHLDGSQSPFPDPQMYVCVFGMNSRKLVEGLTTFYRRVGWEEMASHYQGNFLANYPDEDFEKAAHLCAYVSFAYKNGGAYVTLYNHSFNPVGDVSFPN</sequence>
<dbReference type="EC" id="2.5.1.106" evidence="1 5"/>
<dbReference type="EC" id="3.4.11.17" evidence="3"/>
<dbReference type="EMBL" id="AY861687">
    <property type="protein sequence ID" value="AAX56314.1"/>
    <property type="molecule type" value="mRNA"/>
</dbReference>
<dbReference type="EMBL" id="AAHF01000014">
    <property type="protein sequence ID" value="EAL85145.1"/>
    <property type="status" value="ALT_INIT"/>
    <property type="molecule type" value="Genomic_DNA"/>
</dbReference>
<dbReference type="RefSeq" id="XP_747183.1">
    <property type="nucleotide sequence ID" value="XM_742090.1"/>
</dbReference>
<dbReference type="PDB" id="3O24">
    <property type="method" value="X-ray"/>
    <property type="resolution" value="2.50 A"/>
    <property type="chains" value="A=1-464"/>
</dbReference>
<dbReference type="PDB" id="3O2K">
    <property type="method" value="X-ray"/>
    <property type="resolution" value="2.40 A"/>
    <property type="chains" value="A=1-464"/>
</dbReference>
<dbReference type="PDBsum" id="3O24"/>
<dbReference type="PDBsum" id="3O2K"/>
<dbReference type="SMR" id="Q4WAW7"/>
<dbReference type="STRING" id="330879.Q4WAW7"/>
<dbReference type="ChEMBL" id="CHEMBL5635"/>
<dbReference type="MEROPS" id="M77.004"/>
<dbReference type="GeneID" id="3504530"/>
<dbReference type="KEGG" id="afm:AFUA_8G00210"/>
<dbReference type="eggNOG" id="ENOG502S2XP">
    <property type="taxonomic scope" value="Eukaryota"/>
</dbReference>
<dbReference type="HOGENOM" id="CLU_037431_0_0_1"/>
<dbReference type="InParanoid" id="Q4WAW7"/>
<dbReference type="OrthoDB" id="5392033at2759"/>
<dbReference type="BioCyc" id="MetaCyc:MONOMER-18762"/>
<dbReference type="BRENDA" id="2.5.1.106">
    <property type="organism ID" value="508"/>
</dbReference>
<dbReference type="EvolutionaryTrace" id="Q4WAW7"/>
<dbReference type="PRO" id="PR:Q4WAW7"/>
<dbReference type="Proteomes" id="UP000002530">
    <property type="component" value="Chromosome 8"/>
</dbReference>
<dbReference type="GO" id="GO:0004177">
    <property type="term" value="F:aminopeptidase activity"/>
    <property type="evidence" value="ECO:0007669"/>
    <property type="project" value="UniProtKB-KW"/>
</dbReference>
<dbReference type="GO" id="GO:0004659">
    <property type="term" value="F:prenyltransferase activity"/>
    <property type="evidence" value="ECO:0007669"/>
    <property type="project" value="UniProtKB-KW"/>
</dbReference>
<dbReference type="GO" id="GO:0006508">
    <property type="term" value="P:proteolysis"/>
    <property type="evidence" value="ECO:0007669"/>
    <property type="project" value="UniProtKB-KW"/>
</dbReference>
<dbReference type="GO" id="GO:1902181">
    <property type="term" value="P:verruculogen biosynthetic process"/>
    <property type="evidence" value="ECO:0000314"/>
    <property type="project" value="GO_Central"/>
</dbReference>
<dbReference type="CDD" id="cd13929">
    <property type="entry name" value="PT-DMATS_CymD"/>
    <property type="match status" value="1"/>
</dbReference>
<dbReference type="InterPro" id="IPR033964">
    <property type="entry name" value="Aro_prenylTrfase"/>
</dbReference>
<dbReference type="InterPro" id="IPR017795">
    <property type="entry name" value="Aro_prenylTrfase_DMATS"/>
</dbReference>
<dbReference type="InterPro" id="IPR012148">
    <property type="entry name" value="DMATS-type_fun"/>
</dbReference>
<dbReference type="NCBIfam" id="TIGR03429">
    <property type="entry name" value="arom_pren_DMATS"/>
    <property type="match status" value="1"/>
</dbReference>
<dbReference type="PANTHER" id="PTHR40627">
    <property type="entry name" value="INDOLE PRENYLTRANSFERASE TDIB-RELATED"/>
    <property type="match status" value="1"/>
</dbReference>
<dbReference type="PANTHER" id="PTHR40627:SF3">
    <property type="entry name" value="PRENYLTRANSFERASE ASQH2-RELATED"/>
    <property type="match status" value="1"/>
</dbReference>
<dbReference type="Pfam" id="PF11991">
    <property type="entry name" value="Trp_DMAT"/>
    <property type="match status" value="1"/>
</dbReference>
<dbReference type="PIRSF" id="PIRSF000509">
    <property type="entry name" value="Trp_DMAT"/>
    <property type="match status" value="1"/>
</dbReference>
<dbReference type="SFLD" id="SFLDS00036">
    <property type="entry name" value="Aromatic_Prenyltransferase"/>
    <property type="match status" value="1"/>
</dbReference>
<dbReference type="SFLD" id="SFLDG01162">
    <property type="entry name" value="I"/>
    <property type="match status" value="1"/>
</dbReference>
<gene>
    <name evidence="11" type="primary">ftmPT1</name>
    <name evidence="14" type="synonym">ftmB</name>
    <name type="ORF">AFUA_8G00210</name>
</gene>
<name>FTMB_ASPFU</name>
<organism>
    <name type="scientific">Aspergillus fumigatus (strain ATCC MYA-4609 / CBS 101355 / FGSC A1100 / Af293)</name>
    <name type="common">Neosartorya fumigata</name>
    <dbReference type="NCBI Taxonomy" id="330879"/>
    <lineage>
        <taxon>Eukaryota</taxon>
        <taxon>Fungi</taxon>
        <taxon>Dikarya</taxon>
        <taxon>Ascomycota</taxon>
        <taxon>Pezizomycotina</taxon>
        <taxon>Eurotiomycetes</taxon>
        <taxon>Eurotiomycetidae</taxon>
        <taxon>Eurotiales</taxon>
        <taxon>Aspergillaceae</taxon>
        <taxon>Aspergillus</taxon>
        <taxon>Aspergillus subgen. Fumigati</taxon>
    </lineage>
</organism>
<comment type="function">
    <text evidence="1 2 3 4 5 6 7 8 9 10 15 16">Brevianamide F prenyltransferase; part of the gene cluster that mediates the biosynthesis of fumitremorgins, indole alkaloids that carry not only intriguing chemical structures, but also interesting biological and pharmacological activities (PubMed:16000710, PubMed:23649274). The biosynthesis of fumitremorgin-type alkaloids begins by condensation of the two amino acids L-tryptophan and L-proline to brevianamide F, catalyzed by the non-ribosomal peptide synthetase ftmA (PubMed:16755625). Brevianamide F is then prenylated by the prenyltransferase ftmPT1/ftmB in the presence of dimethylallyl diphosphate, resulting in the formation of tryprostatin B (PubMed:16000710, PubMed:19113967, PubMed:21105662, PubMed:23090579). FtmPT1/ftmB also shows tryptophan aminopeptidase activity with preference for linear peptides containing a tryptophanyl moiety at the N-terminus (PubMed:18635009). The three cytochrome P450 monooxygenases, ftmP450-1/ftmC, ftmP450-2/ftmE and ftmP450-3/FtmG, are responsible for the conversion of tryprostatin B to 6-hydroxytryprostatin B, tryprostatin A to fumitremorgin C and fumitremorgin C to 12,13-dihydroxyfumitremorgin C, respectively (PubMed:19226505). The putative methyltransferase ftmMT/ftmD is expected for the conversion of 6-hydroxytryprostatin B to tryprostatin A (Probable). FtmPT2/FtmH catalyzes the prenylation of 12,13-dihydroxyfumitre-morgin C in the presence of dimethylallyl diphosphate, resulting in the formation of fumitremorgin B (PubMed:18683158). Fumitremorgin B is further converted to verruculogen by ftmOx1/ftmF via the insertion of an endoperoxide bond between the two prenyl moieties (PubMed:19763315). In some fungal species, verruculogen is further converted to fumitremorgin A, but the enzymes involved in this step have not been identified yet (Probable).</text>
</comment>
<comment type="catalytic activity">
    <reaction evidence="1 3 5">
        <text>brevianamide F + dimethylallyl diphosphate = tryprostatin B + diphosphate</text>
        <dbReference type="Rhea" id="RHEA:35939"/>
        <dbReference type="ChEBI" id="CHEBI:33019"/>
        <dbReference type="ChEBI" id="CHEBI:57623"/>
        <dbReference type="ChEBI" id="CHEBI:64530"/>
        <dbReference type="ChEBI" id="CHEBI:72760"/>
        <dbReference type="EC" id="2.5.1.106"/>
    </reaction>
</comment>
<comment type="catalytic activity">
    <reaction evidence="3">
        <text>an N-terminal L-tryptophanyl-L-alpha-aminoacyl-[peptide] + H2O = an N-terminal L-alpha-aminoacyl-[peptide] + L-tryptophan</text>
        <dbReference type="Rhea" id="RHEA:72999"/>
        <dbReference type="Rhea" id="RHEA-COMP:9780"/>
        <dbReference type="Rhea" id="RHEA-COMP:18174"/>
        <dbReference type="ChEBI" id="CHEBI:15377"/>
        <dbReference type="ChEBI" id="CHEBI:57912"/>
        <dbReference type="ChEBI" id="CHEBI:78597"/>
        <dbReference type="ChEBI" id="CHEBI:192694"/>
        <dbReference type="EC" id="3.4.11.17"/>
    </reaction>
    <physiologicalReaction direction="left-to-right" evidence="3">
        <dbReference type="Rhea" id="RHEA:73000"/>
    </physiologicalReaction>
</comment>
<comment type="biophysicochemical properties">
    <kinetics>
        <KM evidence="1">55 uM for brevianamide F</KM>
        <KM evidence="1">74 uM for dimethylallyl diphosphate</KM>
        <KM evidence="3">420 uM for H-L-Trp-L-Gly-OH (for aminopeptidase activity)</KM>
        <KM evidence="13">820 uM for L-tryptophan</KM>
        <KM evidence="13">55 uM for cyclo-L-Trp-L-Pro</KM>
    </kinetics>
</comment>
<comment type="pathway">
    <text evidence="1 10">Mycotoxin biosynthesis.</text>
</comment>
<comment type="similarity">
    <text evidence="15">Belongs to the tryptophan dimethylallyltransferase family.</text>
</comment>
<comment type="caution">
    <text evidence="17">In contrast to other A.fumigatus strains, strain ATCC MYA-4609 does not produce indole alkaloids such as fumitremorgins and verruculogen. While the biosynthetic pathway is complete, a variation in the O-methyltransferase FtmD (AC Q4WAW6) abolishes production of the tryprostatin A intermediate (PubMed:23649274).</text>
</comment>
<comment type="sequence caution" evidence="15">
    <conflict type="erroneous initiation">
        <sequence resource="EMBL-CDS" id="EAL85145"/>
    </conflict>
    <text>Extended N-terminus.</text>
</comment>
<evidence type="ECO:0000269" key="1">
    <source>
    </source>
</evidence>
<evidence type="ECO:0000269" key="2">
    <source>
    </source>
</evidence>
<evidence type="ECO:0000269" key="3">
    <source>
    </source>
</evidence>
<evidence type="ECO:0000269" key="4">
    <source>
    </source>
</evidence>
<evidence type="ECO:0000269" key="5">
    <source>
    </source>
</evidence>
<evidence type="ECO:0000269" key="6">
    <source>
    </source>
</evidence>
<evidence type="ECO:0000269" key="7">
    <source>
    </source>
</evidence>
<evidence type="ECO:0000269" key="8">
    <source>
    </source>
</evidence>
<evidence type="ECO:0000269" key="9">
    <source>
    </source>
</evidence>
<evidence type="ECO:0000269" key="10">
    <source>
    </source>
</evidence>
<evidence type="ECO:0000303" key="11">
    <source>
    </source>
</evidence>
<evidence type="ECO:0000303" key="12">
    <source>
    </source>
</evidence>
<evidence type="ECO:0000303" key="13">
    <source>
    </source>
</evidence>
<evidence type="ECO:0000303" key="14">
    <source>
    </source>
</evidence>
<evidence type="ECO:0000305" key="15"/>
<evidence type="ECO:0000305" key="16">
    <source>
    </source>
</evidence>
<evidence type="ECO:0000305" key="17">
    <source>
    </source>
</evidence>
<evidence type="ECO:0007829" key="18">
    <source>
        <dbReference type="PDB" id="3O24"/>
    </source>
</evidence>
<evidence type="ECO:0007829" key="19">
    <source>
        <dbReference type="PDB" id="3O2K"/>
    </source>
</evidence>
<feature type="chain" id="PRO_0000424111" description="Tryprostatin B synthase ftmPT1">
    <location>
        <begin position="1"/>
        <end position="464"/>
    </location>
</feature>
<feature type="binding site" evidence="8">
    <location>
        <position position="94"/>
    </location>
    <ligand>
        <name>brevianamide F</name>
        <dbReference type="ChEBI" id="CHEBI:64530"/>
    </ligand>
</feature>
<feature type="binding site" evidence="8">
    <location>
        <position position="102"/>
    </location>
    <ligand>
        <name>brevianamide F</name>
        <dbReference type="ChEBI" id="CHEBI:64530"/>
    </ligand>
</feature>
<feature type="binding site" evidence="8">
    <location>
        <position position="113"/>
    </location>
    <ligand>
        <name>dimethylallyl diphosphate</name>
        <dbReference type="ChEBI" id="CHEBI:57623"/>
    </ligand>
</feature>
<feature type="binding site" evidence="8">
    <location>
        <position position="201"/>
    </location>
    <ligand>
        <name>dimethylallyl diphosphate</name>
        <dbReference type="ChEBI" id="CHEBI:57623"/>
    </ligand>
</feature>
<feature type="binding site" evidence="8">
    <location>
        <position position="203"/>
    </location>
    <ligand>
        <name>dimethylallyl diphosphate</name>
        <dbReference type="ChEBI" id="CHEBI:57623"/>
    </ligand>
</feature>
<feature type="binding site" evidence="8">
    <location>
        <position position="205"/>
    </location>
    <ligand>
        <name>brevianamide F</name>
        <dbReference type="ChEBI" id="CHEBI:64530"/>
    </ligand>
</feature>
<feature type="binding site" evidence="8">
    <location>
        <position position="294"/>
    </location>
    <ligand>
        <name>dimethylallyl diphosphate</name>
        <dbReference type="ChEBI" id="CHEBI:57623"/>
    </ligand>
</feature>
<feature type="binding site" evidence="8">
    <location>
        <position position="296"/>
    </location>
    <ligand>
        <name>dimethylallyl diphosphate</name>
        <dbReference type="ChEBI" id="CHEBI:57623"/>
    </ligand>
</feature>
<feature type="binding site" evidence="8">
    <location>
        <position position="380"/>
    </location>
    <ligand>
        <name>dimethylallyl diphosphate</name>
        <dbReference type="ChEBI" id="CHEBI:57623"/>
    </ligand>
</feature>
<feature type="binding site" evidence="8">
    <location>
        <position position="382"/>
    </location>
    <ligand>
        <name>dimethylallyl diphosphate</name>
        <dbReference type="ChEBI" id="CHEBI:57623"/>
    </ligand>
</feature>
<feature type="binding site" evidence="8">
    <location>
        <position position="446"/>
    </location>
    <ligand>
        <name>dimethylallyl diphosphate</name>
        <dbReference type="ChEBI" id="CHEBI:57623"/>
    </ligand>
</feature>
<feature type="binding site" evidence="8">
    <location>
        <position position="450"/>
    </location>
    <ligand>
        <name>dimethylallyl diphosphate</name>
        <dbReference type="ChEBI" id="CHEBI:57623"/>
    </ligand>
</feature>
<feature type="site" description="Required for regioselectivity" evidence="8">
    <location>
        <position position="115"/>
    </location>
</feature>
<feature type="mutagenesis site" description="Abolishes tryprostatin B synthase activity." evidence="8">
    <original>E</original>
    <variation>Q</variation>
    <location>
        <position position="102"/>
    </location>
</feature>
<feature type="mutagenesis site" description="Retains ability to consume brevianamide F but mediates formation of a different product that carries a reverse prenyl moiety at the C-3 of the indole nucleus." evidence="8">
    <original>G</original>
    <variation>T</variation>
    <location>
        <position position="115"/>
    </location>
</feature>
<feature type="mutagenesis site" description="Slightly affects tryprostatin B synthase activity." evidence="8">
    <original>H</original>
    <variation>F</variation>
    <location>
        <position position="279"/>
    </location>
</feature>
<feature type="sequence conflict" description="In Ref. 1; AAX56314." evidence="15" ref="1">
    <original>G</original>
    <variation>A</variation>
    <location>
        <position position="415"/>
    </location>
</feature>
<feature type="helix" evidence="19">
    <location>
        <begin position="17"/>
        <end position="23"/>
    </location>
</feature>
<feature type="helix" evidence="19">
    <location>
        <begin position="31"/>
        <end position="50"/>
    </location>
</feature>
<feature type="helix" evidence="19">
    <location>
        <begin position="55"/>
        <end position="68"/>
    </location>
</feature>
<feature type="helix" evidence="19">
    <location>
        <begin position="70"/>
        <end position="73"/>
    </location>
</feature>
<feature type="turn" evidence="19">
    <location>
        <begin position="81"/>
        <end position="83"/>
    </location>
</feature>
<feature type="strand" evidence="19">
    <location>
        <begin position="100"/>
        <end position="106"/>
    </location>
</feature>
<feature type="turn" evidence="19">
    <location>
        <begin position="107"/>
        <end position="110"/>
    </location>
</feature>
<feature type="strand" evidence="19">
    <location>
        <begin position="111"/>
        <end position="116"/>
    </location>
</feature>
<feature type="strand" evidence="18">
    <location>
        <begin position="128"/>
        <end position="130"/>
    </location>
</feature>
<feature type="helix" evidence="19">
    <location>
        <begin position="134"/>
        <end position="145"/>
    </location>
</feature>
<feature type="helix" evidence="19">
    <location>
        <begin position="152"/>
        <end position="161"/>
    </location>
</feature>
<feature type="helix" evidence="19">
    <location>
        <begin position="165"/>
        <end position="173"/>
    </location>
</feature>
<feature type="helix" evidence="19">
    <location>
        <begin position="175"/>
        <end position="177"/>
    </location>
</feature>
<feature type="strand" evidence="19">
    <location>
        <begin position="186"/>
        <end position="192"/>
    </location>
</feature>
<feature type="strand" evidence="19">
    <location>
        <begin position="198"/>
        <end position="204"/>
    </location>
</feature>
<feature type="helix" evidence="19">
    <location>
        <begin position="207"/>
        <end position="213"/>
    </location>
</feature>
<feature type="helix" evidence="19">
    <location>
        <begin position="217"/>
        <end position="228"/>
    </location>
</feature>
<feature type="helix" evidence="19">
    <location>
        <begin position="235"/>
        <end position="249"/>
    </location>
</feature>
<feature type="strand" evidence="19">
    <location>
        <begin position="276"/>
        <end position="284"/>
    </location>
</feature>
<feature type="helix" evidence="19">
    <location>
        <begin position="288"/>
        <end position="290"/>
    </location>
</feature>
<feature type="strand" evidence="19">
    <location>
        <begin position="293"/>
        <end position="303"/>
    </location>
</feature>
<feature type="helix" evidence="19">
    <location>
        <begin position="304"/>
        <end position="311"/>
    </location>
</feature>
<feature type="turn" evidence="19">
    <location>
        <begin position="312"/>
        <end position="316"/>
    </location>
</feature>
<feature type="helix" evidence="19">
    <location>
        <begin position="320"/>
        <end position="335"/>
    </location>
</feature>
<feature type="strand" evidence="19">
    <location>
        <begin position="363"/>
        <end position="369"/>
    </location>
</feature>
<feature type="strand" evidence="18">
    <location>
        <begin position="371"/>
        <end position="373"/>
    </location>
</feature>
<feature type="strand" evidence="19">
    <location>
        <begin position="378"/>
        <end position="384"/>
    </location>
</feature>
<feature type="helix" evidence="19">
    <location>
        <begin position="390"/>
        <end position="403"/>
    </location>
</feature>
<feature type="helix" evidence="19">
    <location>
        <begin position="407"/>
        <end position="419"/>
    </location>
</feature>
<feature type="turn" evidence="19">
    <location>
        <begin position="426"/>
        <end position="428"/>
    </location>
</feature>
<feature type="strand" evidence="19">
    <location>
        <begin position="432"/>
        <end position="441"/>
    </location>
</feature>
<feature type="strand" evidence="19">
    <location>
        <begin position="444"/>
        <end position="451"/>
    </location>
</feature>
<protein>
    <recommendedName>
        <fullName evidence="11">Tryprostatin B synthase ftmPT1</fullName>
        <ecNumber evidence="1 5">2.5.1.106</ecNumber>
    </recommendedName>
    <alternativeName>
        <fullName evidence="11">Brevianamide F prenyltransferase ftmPT1</fullName>
    </alternativeName>
    <alternativeName>
        <fullName evidence="14">Fumitremorgin biosynthesis protein B</fullName>
    </alternativeName>
    <alternativeName>
        <fullName evidence="12">Tryptophan aminopeptidase ftmPT1</fullName>
        <ecNumber evidence="3">3.4.11.17</ecNumber>
    </alternativeName>
</protein>